<accession>A5GRD9</accession>
<sequence>MAKKSMIARDVKRKKMVERFAAKRSALMEAFANAADPMERLEIHRKIQQLPRNSAPTRMRNRCWATGKPRGVYRDFGLCRNQLRERAHKGLLPGVVKSSW</sequence>
<name>RS14_SYNR3</name>
<comment type="function">
    <text evidence="1">Binds 16S rRNA, required for the assembly of 30S particles and may also be responsible for determining the conformation of the 16S rRNA at the A site.</text>
</comment>
<comment type="subunit">
    <text evidence="1">Part of the 30S ribosomal subunit. Contacts proteins S3 and S10.</text>
</comment>
<comment type="similarity">
    <text evidence="1">Belongs to the universal ribosomal protein uS14 family.</text>
</comment>
<protein>
    <recommendedName>
        <fullName evidence="1">Small ribosomal subunit protein uS14</fullName>
    </recommendedName>
    <alternativeName>
        <fullName evidence="2">30S ribosomal protein S14</fullName>
    </alternativeName>
</protein>
<reference key="1">
    <citation type="submission" date="2006-05" db="EMBL/GenBank/DDBJ databases">
        <authorList>
            <consortium name="Genoscope"/>
        </authorList>
    </citation>
    <scope>NUCLEOTIDE SEQUENCE [LARGE SCALE GENOMIC DNA]</scope>
    <source>
        <strain>RCC307</strain>
    </source>
</reference>
<feature type="chain" id="PRO_1000128616" description="Small ribosomal subunit protein uS14">
    <location>
        <begin position="1"/>
        <end position="100"/>
    </location>
</feature>
<gene>
    <name evidence="1" type="primary">rpsN</name>
    <name evidence="1" type="synonym">rps14</name>
    <name type="ordered locus">SynRCC307_0545</name>
</gene>
<organism>
    <name type="scientific">Synechococcus sp. (strain RCC307)</name>
    <dbReference type="NCBI Taxonomy" id="316278"/>
    <lineage>
        <taxon>Bacteria</taxon>
        <taxon>Bacillati</taxon>
        <taxon>Cyanobacteriota</taxon>
        <taxon>Cyanophyceae</taxon>
        <taxon>Synechococcales</taxon>
        <taxon>Synechococcaceae</taxon>
        <taxon>Synechococcus</taxon>
    </lineage>
</organism>
<evidence type="ECO:0000255" key="1">
    <source>
        <dbReference type="HAMAP-Rule" id="MF_00537"/>
    </source>
</evidence>
<evidence type="ECO:0000305" key="2"/>
<dbReference type="EMBL" id="CT978603">
    <property type="protein sequence ID" value="CAK27448.1"/>
    <property type="molecule type" value="Genomic_DNA"/>
</dbReference>
<dbReference type="SMR" id="A5GRD9"/>
<dbReference type="STRING" id="316278.SynRCC307_0545"/>
<dbReference type="KEGG" id="syr:SynRCC307_0545"/>
<dbReference type="eggNOG" id="COG0199">
    <property type="taxonomic scope" value="Bacteria"/>
</dbReference>
<dbReference type="HOGENOM" id="CLU_139869_0_1_3"/>
<dbReference type="OrthoDB" id="9810484at2"/>
<dbReference type="Proteomes" id="UP000001115">
    <property type="component" value="Chromosome"/>
</dbReference>
<dbReference type="GO" id="GO:0005737">
    <property type="term" value="C:cytoplasm"/>
    <property type="evidence" value="ECO:0007669"/>
    <property type="project" value="UniProtKB-ARBA"/>
</dbReference>
<dbReference type="GO" id="GO:0015935">
    <property type="term" value="C:small ribosomal subunit"/>
    <property type="evidence" value="ECO:0007669"/>
    <property type="project" value="TreeGrafter"/>
</dbReference>
<dbReference type="GO" id="GO:0019843">
    <property type="term" value="F:rRNA binding"/>
    <property type="evidence" value="ECO:0007669"/>
    <property type="project" value="UniProtKB-UniRule"/>
</dbReference>
<dbReference type="GO" id="GO:0003735">
    <property type="term" value="F:structural constituent of ribosome"/>
    <property type="evidence" value="ECO:0007669"/>
    <property type="project" value="InterPro"/>
</dbReference>
<dbReference type="GO" id="GO:0006412">
    <property type="term" value="P:translation"/>
    <property type="evidence" value="ECO:0007669"/>
    <property type="project" value="UniProtKB-UniRule"/>
</dbReference>
<dbReference type="FunFam" id="1.10.287.1480:FF:000001">
    <property type="entry name" value="30S ribosomal protein S14"/>
    <property type="match status" value="1"/>
</dbReference>
<dbReference type="Gene3D" id="1.10.287.1480">
    <property type="match status" value="1"/>
</dbReference>
<dbReference type="HAMAP" id="MF_00537">
    <property type="entry name" value="Ribosomal_uS14_1"/>
    <property type="match status" value="1"/>
</dbReference>
<dbReference type="InterPro" id="IPR001209">
    <property type="entry name" value="Ribosomal_uS14"/>
</dbReference>
<dbReference type="InterPro" id="IPR023036">
    <property type="entry name" value="Ribosomal_uS14_bac/plastid"/>
</dbReference>
<dbReference type="InterPro" id="IPR018271">
    <property type="entry name" value="Ribosomal_uS14_CS"/>
</dbReference>
<dbReference type="NCBIfam" id="NF006477">
    <property type="entry name" value="PRK08881.1"/>
    <property type="match status" value="1"/>
</dbReference>
<dbReference type="PANTHER" id="PTHR19836">
    <property type="entry name" value="30S RIBOSOMAL PROTEIN S14"/>
    <property type="match status" value="1"/>
</dbReference>
<dbReference type="PANTHER" id="PTHR19836:SF19">
    <property type="entry name" value="SMALL RIBOSOMAL SUBUNIT PROTEIN US14M"/>
    <property type="match status" value="1"/>
</dbReference>
<dbReference type="Pfam" id="PF00253">
    <property type="entry name" value="Ribosomal_S14"/>
    <property type="match status" value="1"/>
</dbReference>
<dbReference type="SUPFAM" id="SSF57716">
    <property type="entry name" value="Glucocorticoid receptor-like (DNA-binding domain)"/>
    <property type="match status" value="1"/>
</dbReference>
<dbReference type="PROSITE" id="PS00527">
    <property type="entry name" value="RIBOSOMAL_S14"/>
    <property type="match status" value="1"/>
</dbReference>
<proteinExistence type="inferred from homology"/>
<keyword id="KW-1185">Reference proteome</keyword>
<keyword id="KW-0687">Ribonucleoprotein</keyword>
<keyword id="KW-0689">Ribosomal protein</keyword>
<keyword id="KW-0694">RNA-binding</keyword>
<keyword id="KW-0699">rRNA-binding</keyword>